<comment type="catalytic activity">
    <reaction evidence="1">
        <text>(2R)-3-phosphoglycerate + ATP = (2R)-3-phospho-glyceroyl phosphate + ADP</text>
        <dbReference type="Rhea" id="RHEA:14801"/>
        <dbReference type="ChEBI" id="CHEBI:30616"/>
        <dbReference type="ChEBI" id="CHEBI:57604"/>
        <dbReference type="ChEBI" id="CHEBI:58272"/>
        <dbReference type="ChEBI" id="CHEBI:456216"/>
        <dbReference type="EC" id="2.7.2.3"/>
    </reaction>
</comment>
<comment type="pathway">
    <text evidence="1">Carbohydrate degradation; glycolysis; pyruvate from D-glyceraldehyde 3-phosphate: step 2/5.</text>
</comment>
<comment type="subunit">
    <text evidence="1">Monomer.</text>
</comment>
<comment type="subcellular location">
    <subcellularLocation>
        <location evidence="1">Cytoplasm</location>
    </subcellularLocation>
</comment>
<comment type="similarity">
    <text evidence="1">Belongs to the phosphoglycerate kinase family.</text>
</comment>
<name>PGK_LISW6</name>
<accession>A0ALE2</accession>
<protein>
    <recommendedName>
        <fullName evidence="1">Phosphoglycerate kinase</fullName>
        <ecNumber evidence="1">2.7.2.3</ecNumber>
    </recommendedName>
</protein>
<dbReference type="EC" id="2.7.2.3" evidence="1"/>
<dbReference type="EMBL" id="AM263198">
    <property type="protein sequence ID" value="CAK21824.1"/>
    <property type="molecule type" value="Genomic_DNA"/>
</dbReference>
<dbReference type="RefSeq" id="WP_011703143.1">
    <property type="nucleotide sequence ID" value="NC_008555.1"/>
</dbReference>
<dbReference type="SMR" id="A0ALE2"/>
<dbReference type="STRING" id="386043.lwe2406"/>
<dbReference type="GeneID" id="69055756"/>
<dbReference type="KEGG" id="lwe:lwe2406"/>
<dbReference type="eggNOG" id="COG0126">
    <property type="taxonomic scope" value="Bacteria"/>
</dbReference>
<dbReference type="HOGENOM" id="CLU_025427_0_2_9"/>
<dbReference type="OrthoDB" id="9808460at2"/>
<dbReference type="UniPathway" id="UPA00109">
    <property type="reaction ID" value="UER00185"/>
</dbReference>
<dbReference type="Proteomes" id="UP000000779">
    <property type="component" value="Chromosome"/>
</dbReference>
<dbReference type="GO" id="GO:0005829">
    <property type="term" value="C:cytosol"/>
    <property type="evidence" value="ECO:0007669"/>
    <property type="project" value="TreeGrafter"/>
</dbReference>
<dbReference type="GO" id="GO:0043531">
    <property type="term" value="F:ADP binding"/>
    <property type="evidence" value="ECO:0007669"/>
    <property type="project" value="TreeGrafter"/>
</dbReference>
<dbReference type="GO" id="GO:0005524">
    <property type="term" value="F:ATP binding"/>
    <property type="evidence" value="ECO:0007669"/>
    <property type="project" value="UniProtKB-KW"/>
</dbReference>
<dbReference type="GO" id="GO:0004618">
    <property type="term" value="F:phosphoglycerate kinase activity"/>
    <property type="evidence" value="ECO:0007669"/>
    <property type="project" value="UniProtKB-UniRule"/>
</dbReference>
<dbReference type="GO" id="GO:0006094">
    <property type="term" value="P:gluconeogenesis"/>
    <property type="evidence" value="ECO:0007669"/>
    <property type="project" value="TreeGrafter"/>
</dbReference>
<dbReference type="GO" id="GO:0006096">
    <property type="term" value="P:glycolytic process"/>
    <property type="evidence" value="ECO:0007669"/>
    <property type="project" value="UniProtKB-UniRule"/>
</dbReference>
<dbReference type="CDD" id="cd00318">
    <property type="entry name" value="Phosphoglycerate_kinase"/>
    <property type="match status" value="1"/>
</dbReference>
<dbReference type="FunFam" id="3.40.50.1260:FF:000001">
    <property type="entry name" value="Phosphoglycerate kinase"/>
    <property type="match status" value="1"/>
</dbReference>
<dbReference type="FunFam" id="3.40.50.1260:FF:000008">
    <property type="entry name" value="Phosphoglycerate kinase"/>
    <property type="match status" value="1"/>
</dbReference>
<dbReference type="Gene3D" id="3.40.50.1260">
    <property type="entry name" value="Phosphoglycerate kinase, N-terminal domain"/>
    <property type="match status" value="2"/>
</dbReference>
<dbReference type="HAMAP" id="MF_00145">
    <property type="entry name" value="Phosphoglyc_kinase"/>
    <property type="match status" value="1"/>
</dbReference>
<dbReference type="InterPro" id="IPR001576">
    <property type="entry name" value="Phosphoglycerate_kinase"/>
</dbReference>
<dbReference type="InterPro" id="IPR015911">
    <property type="entry name" value="Phosphoglycerate_kinase_CS"/>
</dbReference>
<dbReference type="InterPro" id="IPR015824">
    <property type="entry name" value="Phosphoglycerate_kinase_N"/>
</dbReference>
<dbReference type="InterPro" id="IPR036043">
    <property type="entry name" value="Phosphoglycerate_kinase_sf"/>
</dbReference>
<dbReference type="PANTHER" id="PTHR11406">
    <property type="entry name" value="PHOSPHOGLYCERATE KINASE"/>
    <property type="match status" value="1"/>
</dbReference>
<dbReference type="PANTHER" id="PTHR11406:SF23">
    <property type="entry name" value="PHOSPHOGLYCERATE KINASE 1, CHLOROPLASTIC-RELATED"/>
    <property type="match status" value="1"/>
</dbReference>
<dbReference type="Pfam" id="PF00162">
    <property type="entry name" value="PGK"/>
    <property type="match status" value="1"/>
</dbReference>
<dbReference type="PIRSF" id="PIRSF000724">
    <property type="entry name" value="Pgk"/>
    <property type="match status" value="1"/>
</dbReference>
<dbReference type="PRINTS" id="PR00477">
    <property type="entry name" value="PHGLYCKINASE"/>
</dbReference>
<dbReference type="SUPFAM" id="SSF53748">
    <property type="entry name" value="Phosphoglycerate kinase"/>
    <property type="match status" value="1"/>
</dbReference>
<dbReference type="PROSITE" id="PS00111">
    <property type="entry name" value="PGLYCERATE_KINASE"/>
    <property type="match status" value="1"/>
</dbReference>
<organism>
    <name type="scientific">Listeria welshimeri serovar 6b (strain ATCC 35897 / DSM 20650 / CCUG 15529 / CIP 8149 / NCTC 11857 / SLCC 5334 / V8)</name>
    <dbReference type="NCBI Taxonomy" id="386043"/>
    <lineage>
        <taxon>Bacteria</taxon>
        <taxon>Bacillati</taxon>
        <taxon>Bacillota</taxon>
        <taxon>Bacilli</taxon>
        <taxon>Bacillales</taxon>
        <taxon>Listeriaceae</taxon>
        <taxon>Listeria</taxon>
    </lineage>
</organism>
<evidence type="ECO:0000255" key="1">
    <source>
        <dbReference type="HAMAP-Rule" id="MF_00145"/>
    </source>
</evidence>
<keyword id="KW-0067">ATP-binding</keyword>
<keyword id="KW-0963">Cytoplasm</keyword>
<keyword id="KW-0324">Glycolysis</keyword>
<keyword id="KW-0418">Kinase</keyword>
<keyword id="KW-0547">Nucleotide-binding</keyword>
<keyword id="KW-0808">Transferase</keyword>
<reference key="1">
    <citation type="journal article" date="2006" name="J. Bacteriol.">
        <title>Whole-genome sequence of Listeria welshimeri reveals common steps in genome reduction with Listeria innocua as compared to Listeria monocytogenes.</title>
        <authorList>
            <person name="Hain T."/>
            <person name="Steinweg C."/>
            <person name="Kuenne C.T."/>
            <person name="Billion A."/>
            <person name="Ghai R."/>
            <person name="Chatterjee S.S."/>
            <person name="Domann E."/>
            <person name="Kaerst U."/>
            <person name="Goesmann A."/>
            <person name="Bekel T."/>
            <person name="Bartels D."/>
            <person name="Kaiser O."/>
            <person name="Meyer F."/>
            <person name="Puehler A."/>
            <person name="Weisshaar B."/>
            <person name="Wehland J."/>
            <person name="Liang C."/>
            <person name="Dandekar T."/>
            <person name="Lampidis R."/>
            <person name="Kreft J."/>
            <person name="Goebel W."/>
            <person name="Chakraborty T."/>
        </authorList>
    </citation>
    <scope>NUCLEOTIDE SEQUENCE [LARGE SCALE GENOMIC DNA]</scope>
    <source>
        <strain>ATCC 35897 / DSM 20650 / CCUG 15529 / CIP 8149 / NCTC 11857 / SLCC 5334 / V8</strain>
    </source>
</reference>
<sequence length="396" mass="42076">MAKKVVTDLDLKDKKVLVRVDFNVPMKDGKITNDNRIVAALPTIEYILEQNGKAILFSHLGKVKTEEDKEGKSLRPVAARLSELLGKEVKFVPTTRGPELEKAIDELKDGEVLLFENTRFEDIDGKKESKNDPELGKYWASLGDVFVNDAFGTAHRAHASNVGIASNLESAAGFLMEKEIKFIGGVVDNPARPLVAILGGAKVSDKIGVIENLLTKADKVLVGGGMTFTFMAAKGQEIGKSLLEADKVELAKGLLEKAGDKLVLPVDAVVSKEFSNDAPFHTVSADSIPADEMGLDIGQATIDLFTKELQGAKTVVWNGPMGVFELSNFAKGTIGVCEAIANLTDATTIIGGGDSAAAAMDLGFADKFTHISTGGGASLEYLEGKELPGVASISDK</sequence>
<gene>
    <name evidence="1" type="primary">pgk</name>
    <name type="ordered locus">lwe2406</name>
</gene>
<proteinExistence type="inferred from homology"/>
<feature type="chain" id="PRO_1000009628" description="Phosphoglycerate kinase">
    <location>
        <begin position="1"/>
        <end position="396"/>
    </location>
</feature>
<feature type="binding site" evidence="1">
    <location>
        <begin position="21"/>
        <end position="23"/>
    </location>
    <ligand>
        <name>substrate</name>
    </ligand>
</feature>
<feature type="binding site" evidence="1">
    <location>
        <position position="36"/>
    </location>
    <ligand>
        <name>substrate</name>
    </ligand>
</feature>
<feature type="binding site" evidence="1">
    <location>
        <begin position="59"/>
        <end position="62"/>
    </location>
    <ligand>
        <name>substrate</name>
    </ligand>
</feature>
<feature type="binding site" evidence="1">
    <location>
        <position position="119"/>
    </location>
    <ligand>
        <name>substrate</name>
    </ligand>
</feature>
<feature type="binding site" evidence="1">
    <location>
        <position position="156"/>
    </location>
    <ligand>
        <name>substrate</name>
    </ligand>
</feature>
<feature type="binding site" evidence="1">
    <location>
        <position position="206"/>
    </location>
    <ligand>
        <name>ATP</name>
        <dbReference type="ChEBI" id="CHEBI:30616"/>
    </ligand>
</feature>
<feature type="binding site" evidence="1">
    <location>
        <position position="294"/>
    </location>
    <ligand>
        <name>ATP</name>
        <dbReference type="ChEBI" id="CHEBI:30616"/>
    </ligand>
</feature>
<feature type="binding site" evidence="1">
    <location>
        <position position="325"/>
    </location>
    <ligand>
        <name>ATP</name>
        <dbReference type="ChEBI" id="CHEBI:30616"/>
    </ligand>
</feature>
<feature type="binding site" evidence="1">
    <location>
        <begin position="352"/>
        <end position="355"/>
    </location>
    <ligand>
        <name>ATP</name>
        <dbReference type="ChEBI" id="CHEBI:30616"/>
    </ligand>
</feature>